<feature type="signal peptide" evidence="4">
    <location>
        <begin position="1"/>
        <end position="16"/>
    </location>
</feature>
<feature type="chain" id="PRO_0000287252" description="Glycoprotein">
    <location>
        <begin position="17"/>
        <end position="511"/>
    </location>
</feature>
<feature type="topological domain" description="Virion surface" evidence="4">
    <location>
        <begin position="17"/>
        <end position="467"/>
    </location>
</feature>
<feature type="transmembrane region" description="Helical" evidence="4">
    <location>
        <begin position="468"/>
        <end position="488"/>
    </location>
</feature>
<feature type="topological domain" description="Intravirion" evidence="4">
    <location>
        <begin position="489"/>
        <end position="511"/>
    </location>
</feature>
<feature type="region of interest" description="Trimerization" evidence="3">
    <location>
        <begin position="18"/>
        <end position="35"/>
    </location>
</feature>
<feature type="region of interest" description="Fusion peptide" evidence="3">
    <location>
        <begin position="53"/>
        <end position="172"/>
    </location>
</feature>
<feature type="region of interest" description="Trimerization" evidence="3">
    <location>
        <begin position="259"/>
        <end position="309"/>
    </location>
</feature>
<feature type="region of interest" description="Trimerization" evidence="3">
    <location>
        <begin position="383"/>
        <end position="405"/>
    </location>
</feature>
<feature type="short sequence motif" description="basolateral targeting ex vivo" evidence="1">
    <location>
        <begin position="496"/>
        <end position="506"/>
    </location>
</feature>
<feature type="site" description="Involved in the interaction with host LDL receptor" evidence="3">
    <location>
        <position position="63"/>
    </location>
</feature>
<feature type="site" description="pH sensor in the pre-fusion state" evidence="3">
    <location>
        <position position="76"/>
    </location>
</feature>
<feature type="site" description="pH sensor in the pre-fusion state" evidence="3">
    <location>
        <position position="178"/>
    </location>
</feature>
<feature type="site" description="Involved in the interaction with host LDL receptor" evidence="3">
    <location>
        <position position="370"/>
    </location>
</feature>
<feature type="site" description="pH sensor in the pre-fusion state" evidence="3">
    <location>
        <position position="423"/>
    </location>
</feature>
<feature type="lipid moiety-binding region" description="S-palmitoyl cysteine; by host" evidence="1">
    <location>
        <position position="489"/>
    </location>
</feature>
<feature type="glycosylation site" description="N-linked (GlcNAc...) asparagine; by host" evidence="4">
    <location>
        <position position="179"/>
    </location>
</feature>
<feature type="glycosylation site" description="N-linked (GlcNAc...) asparagine; by host" evidence="4">
    <location>
        <position position="336"/>
    </location>
</feature>
<feature type="disulfide bond" evidence="1">
    <location>
        <begin position="40"/>
        <end position="300"/>
    </location>
</feature>
<feature type="disulfide bond" evidence="1">
    <location>
        <begin position="75"/>
        <end position="108"/>
    </location>
</feature>
<feature type="disulfide bond" evidence="1">
    <location>
        <begin position="84"/>
        <end position="130"/>
    </location>
</feature>
<feature type="disulfide bond" evidence="1">
    <location>
        <begin position="169"/>
        <end position="174"/>
    </location>
</feature>
<feature type="disulfide bond" evidence="1">
    <location>
        <begin position="193"/>
        <end position="240"/>
    </location>
</feature>
<feature type="disulfide bond" evidence="1">
    <location>
        <begin position="235"/>
        <end position="269"/>
    </location>
</feature>
<dbReference type="EMBL" id="AF473864">
    <property type="protein sequence ID" value="AAN16983.1"/>
    <property type="molecule type" value="Genomic_RNA"/>
</dbReference>
<dbReference type="SMR" id="Q8B0I1"/>
<dbReference type="GlyCosmos" id="Q8B0I1">
    <property type="glycosylation" value="2 sites, No reported glycans"/>
</dbReference>
<dbReference type="Proteomes" id="UP000007624">
    <property type="component" value="Segment"/>
</dbReference>
<dbReference type="GO" id="GO:0033644">
    <property type="term" value="C:host cell membrane"/>
    <property type="evidence" value="ECO:0007669"/>
    <property type="project" value="UniProtKB-SubCell"/>
</dbReference>
<dbReference type="GO" id="GO:0016020">
    <property type="term" value="C:membrane"/>
    <property type="evidence" value="ECO:0007669"/>
    <property type="project" value="UniProtKB-KW"/>
</dbReference>
<dbReference type="GO" id="GO:0019031">
    <property type="term" value="C:viral envelope"/>
    <property type="evidence" value="ECO:0007669"/>
    <property type="project" value="UniProtKB-KW"/>
</dbReference>
<dbReference type="GO" id="GO:0055036">
    <property type="term" value="C:virion membrane"/>
    <property type="evidence" value="ECO:0007669"/>
    <property type="project" value="UniProtKB-SubCell"/>
</dbReference>
<dbReference type="GO" id="GO:0075512">
    <property type="term" value="P:clathrin-dependent endocytosis of virus by host cell"/>
    <property type="evidence" value="ECO:0007669"/>
    <property type="project" value="UniProtKB-KW"/>
</dbReference>
<dbReference type="GO" id="GO:0098670">
    <property type="term" value="P:entry receptor-mediated virion attachment to host cell"/>
    <property type="evidence" value="ECO:0007669"/>
    <property type="project" value="UniProtKB-KW"/>
</dbReference>
<dbReference type="GO" id="GO:0039654">
    <property type="term" value="P:fusion of virus membrane with host endosome membrane"/>
    <property type="evidence" value="ECO:0007669"/>
    <property type="project" value="UniProtKB-KW"/>
</dbReference>
<dbReference type="Gene3D" id="2.30.29.130">
    <property type="match status" value="2"/>
</dbReference>
<dbReference type="Gene3D" id="2.30.30.640">
    <property type="match status" value="2"/>
</dbReference>
<dbReference type="InterPro" id="IPR055447">
    <property type="entry name" value="Rhabdo_glycop_CD"/>
</dbReference>
<dbReference type="InterPro" id="IPR001903">
    <property type="entry name" value="Rhabdo_glycop_FD"/>
</dbReference>
<dbReference type="Pfam" id="PF24833">
    <property type="entry name" value="Rhabdo_glycop_CD"/>
    <property type="match status" value="1"/>
</dbReference>
<dbReference type="Pfam" id="PF00974">
    <property type="entry name" value="Rhabdo_glycop_FD"/>
    <property type="match status" value="1"/>
</dbReference>
<dbReference type="SUPFAM" id="SSF161008">
    <property type="entry name" value="Viral glycoprotein ectodomain-like"/>
    <property type="match status" value="1"/>
</dbReference>
<accession>Q8B0I1</accession>
<name>GLYCO_VSIVN</name>
<proteinExistence type="evidence at protein level"/>
<evidence type="ECO:0000250" key="1"/>
<evidence type="ECO:0000250" key="2">
    <source>
        <dbReference type="UniProtKB" id="P03522"/>
    </source>
</evidence>
<evidence type="ECO:0000250" key="3">
    <source>
        <dbReference type="UniProtKB" id="P0C2X0"/>
    </source>
</evidence>
<evidence type="ECO:0000255" key="4"/>
<evidence type="ECO:0000305" key="5"/>
<organismHost>
    <name type="scientific">Aedes</name>
    <dbReference type="NCBI Taxonomy" id="7158"/>
</organismHost>
<organismHost>
    <name type="scientific">Bos taurus</name>
    <name type="common">Bovine</name>
    <dbReference type="NCBI Taxonomy" id="9913"/>
</organismHost>
<organismHost>
    <name type="scientific">Culicoides</name>
    <dbReference type="NCBI Taxonomy" id="58271"/>
</organismHost>
<organismHost>
    <name type="scientific">Equus asinus</name>
    <name type="common">Donkey</name>
    <name type="synonym">Equus africanus asinus</name>
    <dbReference type="NCBI Taxonomy" id="9793"/>
</organismHost>
<organismHost>
    <name type="scientific">Equus caballus</name>
    <name type="common">Horse</name>
    <dbReference type="NCBI Taxonomy" id="9796"/>
</organismHost>
<organismHost>
    <name type="scientific">Homo sapiens</name>
    <name type="common">Human</name>
    <dbReference type="NCBI Taxonomy" id="9606"/>
</organismHost>
<organismHost>
    <name type="scientific">Lutzomyia</name>
    <dbReference type="NCBI Taxonomy" id="252607"/>
</organismHost>
<organismHost>
    <name type="scientific">Musca domestica</name>
    <name type="common">House fly</name>
    <dbReference type="NCBI Taxonomy" id="7370"/>
</organismHost>
<organismHost>
    <name type="scientific">Simuliidae</name>
    <name type="common">black flies</name>
    <dbReference type="NCBI Taxonomy" id="7190"/>
</organismHost>
<organismHost>
    <name type="scientific">Sus scrofa</name>
    <name type="common">Pig</name>
    <dbReference type="NCBI Taxonomy" id="9823"/>
</organismHost>
<protein>
    <recommendedName>
        <fullName>Glycoprotein</fullName>
    </recommendedName>
</protein>
<sequence>MKCLLYLAFLSIGVNCKFTIVFPHNQKGTWKNVPSNYHYCPSSSDLNWHNDLIGTALQVKMPKSHKAIQADGWMCHASKWVTTCDFRWYGPKYITHSIRSFTPSVEQCRESIEQTKQGTWLNPGFPPQSCGYATVTDAEAVIVQVTPHHVLVDEYTGEWVDSQFINGKCSNDICPTVHNSTTWHSDYKVKGLCDSNLISMDITFFSEDGELSSLGKEGTGFRSNHFAYETGDKACKMQYCKHWGVRLPSGVWFEMADQDLFAAARFPECPEGSSISAPSQTSVDVSLIQDVERILDYSLCQETWSKIGAGLPISPVDLSYLAPKNPGTGPAFTIINGTLKYFETRYIRVDIAAPILSRMVGMISGTTTERELWDDWAPYEDVEIGPNGVLRTSSGYKFPLYMIGHGMLDSDLHLSSKAQVFEHPHIQDAASQLPDDETLFFGDTGLSKNPIELVEGWFSGWKSSIASFFFIIGLIIGLFLVLRVGIYLCIKLKHTKKRQIYTDIEMNRLGK</sequence>
<keyword id="KW-1165">Clathrin-mediated endocytosis of virus by host</keyword>
<keyword id="KW-1015">Disulfide bond</keyword>
<keyword id="KW-1170">Fusion of virus membrane with host endosomal membrane</keyword>
<keyword id="KW-1168">Fusion of virus membrane with host membrane</keyword>
<keyword id="KW-0325">Glycoprotein</keyword>
<keyword id="KW-1043">Host membrane</keyword>
<keyword id="KW-0945">Host-virus interaction</keyword>
<keyword id="KW-0449">Lipoprotein</keyword>
<keyword id="KW-0472">Membrane</keyword>
<keyword id="KW-0564">Palmitate</keyword>
<keyword id="KW-0732">Signal</keyword>
<keyword id="KW-0812">Transmembrane</keyword>
<keyword id="KW-1133">Transmembrane helix</keyword>
<keyword id="KW-1161">Viral attachment to host cell</keyword>
<keyword id="KW-1234">Viral attachment to host entry receptor</keyword>
<keyword id="KW-0261">Viral envelope protein</keyword>
<keyword id="KW-1162">Viral penetration into host cytoplasm</keyword>
<keyword id="KW-0946">Virion</keyword>
<keyword id="KW-1164">Virus endocytosis by host</keyword>
<keyword id="KW-1160">Virus entry into host cell</keyword>
<organism>
    <name type="scientific">Vesicular stomatitis Indiana virus (strain 98COE North America)</name>
    <name type="common">VSIV</name>
    <dbReference type="NCBI Taxonomy" id="434488"/>
    <lineage>
        <taxon>Viruses</taxon>
        <taxon>Riboviria</taxon>
        <taxon>Orthornavirae</taxon>
        <taxon>Negarnaviricota</taxon>
        <taxon>Haploviricotina</taxon>
        <taxon>Monjiviricetes</taxon>
        <taxon>Mononegavirales</taxon>
        <taxon>Rhabdoviridae</taxon>
        <taxon>Alpharhabdovirinae</taxon>
        <taxon>Vesiculovirus</taxon>
        <taxon>Vesiculovirus indiana</taxon>
    </lineage>
</organism>
<gene>
    <name type="primary">G</name>
</gene>
<reference key="1">
    <citation type="journal article" date="2002" name="J. Gen. Virol.">
        <title>Full-length genome analysis of natural isolates of vesicular stomatitis virus (Indiana 1 serotype) from North, Central and South America.</title>
        <authorList>
            <person name="Rodriguez L.L."/>
            <person name="Pauszek S.J."/>
            <person name="Bunch T.A."/>
            <person name="Schumann K.R."/>
        </authorList>
    </citation>
    <scope>NUCLEOTIDE SEQUENCE [GENOMIC RNA]</scope>
</reference>
<comment type="function">
    <text evidence="2">Attaches the virus to host LDL receptors, inducing clathrin-dependent endocytosis of the virion. In the endosome, the acidic pH induces conformational changes in the glycoprotein trimer, which trigger fusion between virus and endosomal membrane.</text>
</comment>
<comment type="subunit">
    <text evidence="2">Homotrimer. Interacts with host LDL at target cell surface.</text>
</comment>
<comment type="subcellular location">
    <subcellularLocation>
        <location evidence="2">Virion membrane</location>
        <topology evidence="2">Single-pass type I membrane protein</topology>
    </subcellularLocation>
    <subcellularLocation>
        <location evidence="2">Host membrane</location>
        <topology evidence="2">Single-pass type I membrane protein</topology>
    </subcellularLocation>
</comment>
<comment type="PTM">
    <text evidence="2">Glycosylated by host. Palmitoylated by host.</text>
</comment>
<comment type="biotechnology">
    <text>Used to pseudotype many virus-like particles like lentiviral vector, because of its broad spectrum of host cell tropism. Also used in viral vectors studies in cancer therapy.</text>
</comment>
<comment type="similarity">
    <text evidence="5">Belongs to the vesiculovirus glycoprotein family.</text>
</comment>